<evidence type="ECO:0000255" key="1">
    <source>
        <dbReference type="HAMAP-Rule" id="MF_01006"/>
    </source>
</evidence>
<comment type="function">
    <text evidence="1">Catalyzes the dephosphorylation of undecaprenyl diphosphate (UPP). Confers resistance to bacitracin.</text>
</comment>
<comment type="catalytic activity">
    <reaction evidence="1">
        <text>di-trans,octa-cis-undecaprenyl diphosphate + H2O = di-trans,octa-cis-undecaprenyl phosphate + phosphate + H(+)</text>
        <dbReference type="Rhea" id="RHEA:28094"/>
        <dbReference type="ChEBI" id="CHEBI:15377"/>
        <dbReference type="ChEBI" id="CHEBI:15378"/>
        <dbReference type="ChEBI" id="CHEBI:43474"/>
        <dbReference type="ChEBI" id="CHEBI:58405"/>
        <dbReference type="ChEBI" id="CHEBI:60392"/>
        <dbReference type="EC" id="3.6.1.27"/>
    </reaction>
</comment>
<comment type="subcellular location">
    <subcellularLocation>
        <location evidence="1">Cell inner membrane</location>
        <topology evidence="1">Multi-pass membrane protein</topology>
    </subcellularLocation>
</comment>
<comment type="miscellaneous">
    <text>Bacitracin is thought to be involved in the inhibition of peptidoglycan synthesis by sequestering undecaprenyl diphosphate, thereby reducing the pool of lipid carrier available.</text>
</comment>
<comment type="similarity">
    <text evidence="1">Belongs to the UppP family.</text>
</comment>
<gene>
    <name evidence="1" type="primary">uppP</name>
    <name type="ordered locus">Jann_0247</name>
</gene>
<feature type="chain" id="PRO_0000250239" description="Undecaprenyl-diphosphatase">
    <location>
        <begin position="1"/>
        <end position="267"/>
    </location>
</feature>
<feature type="transmembrane region" description="Helical" evidence="1">
    <location>
        <begin position="1"/>
        <end position="21"/>
    </location>
</feature>
<feature type="transmembrane region" description="Helical" evidence="1">
    <location>
        <begin position="40"/>
        <end position="60"/>
    </location>
</feature>
<feature type="transmembrane region" description="Helical" evidence="1">
    <location>
        <begin position="85"/>
        <end position="105"/>
    </location>
</feature>
<feature type="transmembrane region" description="Helical" evidence="1">
    <location>
        <begin position="112"/>
        <end position="132"/>
    </location>
</feature>
<feature type="transmembrane region" description="Helical" evidence="1">
    <location>
        <begin position="189"/>
        <end position="209"/>
    </location>
</feature>
<feature type="transmembrane region" description="Helical" evidence="1">
    <location>
        <begin position="219"/>
        <end position="239"/>
    </location>
</feature>
<feature type="transmembrane region" description="Helical" evidence="1">
    <location>
        <begin position="245"/>
        <end position="265"/>
    </location>
</feature>
<organism>
    <name type="scientific">Jannaschia sp. (strain CCS1)</name>
    <dbReference type="NCBI Taxonomy" id="290400"/>
    <lineage>
        <taxon>Bacteria</taxon>
        <taxon>Pseudomonadati</taxon>
        <taxon>Pseudomonadota</taxon>
        <taxon>Alphaproteobacteria</taxon>
        <taxon>Rhodobacterales</taxon>
        <taxon>Roseobacteraceae</taxon>
        <taxon>Jannaschia</taxon>
    </lineage>
</organism>
<reference key="1">
    <citation type="submission" date="2006-02" db="EMBL/GenBank/DDBJ databases">
        <title>Complete sequence of chromosome of Jannaschia sp. CCS1.</title>
        <authorList>
            <consortium name="US DOE Joint Genome Institute"/>
            <person name="Copeland A."/>
            <person name="Lucas S."/>
            <person name="Lapidus A."/>
            <person name="Barry K."/>
            <person name="Detter J.C."/>
            <person name="Glavina del Rio T."/>
            <person name="Hammon N."/>
            <person name="Israni S."/>
            <person name="Pitluck S."/>
            <person name="Brettin T."/>
            <person name="Bruce D."/>
            <person name="Han C."/>
            <person name="Tapia R."/>
            <person name="Gilna P."/>
            <person name="Chertkov O."/>
            <person name="Saunders E."/>
            <person name="Schmutz J."/>
            <person name="Larimer F."/>
            <person name="Land M."/>
            <person name="Kyrpides N."/>
            <person name="Lykidis A."/>
            <person name="Moran M.A."/>
            <person name="Belas R."/>
            <person name="Ye W."/>
            <person name="Buchan A."/>
            <person name="Gonzalez J.M."/>
            <person name="Schell M.A."/>
            <person name="Richardson P."/>
        </authorList>
    </citation>
    <scope>NUCLEOTIDE SEQUENCE [LARGE SCALE GENOMIC DNA]</scope>
    <source>
        <strain>CCS1</strain>
    </source>
</reference>
<keyword id="KW-0046">Antibiotic resistance</keyword>
<keyword id="KW-0997">Cell inner membrane</keyword>
<keyword id="KW-1003">Cell membrane</keyword>
<keyword id="KW-0133">Cell shape</keyword>
<keyword id="KW-0961">Cell wall biogenesis/degradation</keyword>
<keyword id="KW-0378">Hydrolase</keyword>
<keyword id="KW-0472">Membrane</keyword>
<keyword id="KW-0573">Peptidoglycan synthesis</keyword>
<keyword id="KW-1185">Reference proteome</keyword>
<keyword id="KW-0812">Transmembrane</keyword>
<keyword id="KW-1133">Transmembrane helix</keyword>
<sequence>MSLFTLFLLALVQGITEFLPISSSGHLILLPNLLGIEDQGQAIDVAVHVGTLGAVILYFWRDVKAAIAGTPRLLTGRIDTPGAKLAFLLIIATIPVIIFGLFLEVTGIYDSLRSIAVIGWTMLIFGLVLYWADQRGGTEKQSDDWSLRDAVTMGLWQAVALIPGTSRSGITITAARFLGYDRESAARVAMLMSIPTIIATGVFAGAEVIATADAQTARDGAIAAALSFLAALAALTLMFRLLKSVSFTPYVIYRVILGVILLVIAYA</sequence>
<proteinExistence type="inferred from homology"/>
<accession>Q28VU8</accession>
<name>UPPP_JANSC</name>
<protein>
    <recommendedName>
        <fullName evidence="1">Undecaprenyl-diphosphatase</fullName>
        <ecNumber evidence="1">3.6.1.27</ecNumber>
    </recommendedName>
    <alternativeName>
        <fullName evidence="1">Bacitracin resistance protein</fullName>
    </alternativeName>
    <alternativeName>
        <fullName evidence="1">Undecaprenyl pyrophosphate phosphatase</fullName>
    </alternativeName>
</protein>
<dbReference type="EC" id="3.6.1.27" evidence="1"/>
<dbReference type="EMBL" id="CP000264">
    <property type="protein sequence ID" value="ABD53164.1"/>
    <property type="molecule type" value="Genomic_DNA"/>
</dbReference>
<dbReference type="RefSeq" id="WP_011453373.1">
    <property type="nucleotide sequence ID" value="NC_007802.1"/>
</dbReference>
<dbReference type="SMR" id="Q28VU8"/>
<dbReference type="STRING" id="290400.Jann_0247"/>
<dbReference type="KEGG" id="jan:Jann_0247"/>
<dbReference type="eggNOG" id="COG1968">
    <property type="taxonomic scope" value="Bacteria"/>
</dbReference>
<dbReference type="HOGENOM" id="CLU_060296_1_0_5"/>
<dbReference type="OrthoDB" id="9808289at2"/>
<dbReference type="Proteomes" id="UP000008326">
    <property type="component" value="Chromosome"/>
</dbReference>
<dbReference type="GO" id="GO:0005886">
    <property type="term" value="C:plasma membrane"/>
    <property type="evidence" value="ECO:0007669"/>
    <property type="project" value="UniProtKB-SubCell"/>
</dbReference>
<dbReference type="GO" id="GO:0050380">
    <property type="term" value="F:undecaprenyl-diphosphatase activity"/>
    <property type="evidence" value="ECO:0007669"/>
    <property type="project" value="UniProtKB-UniRule"/>
</dbReference>
<dbReference type="GO" id="GO:0071555">
    <property type="term" value="P:cell wall organization"/>
    <property type="evidence" value="ECO:0007669"/>
    <property type="project" value="UniProtKB-KW"/>
</dbReference>
<dbReference type="GO" id="GO:0009252">
    <property type="term" value="P:peptidoglycan biosynthetic process"/>
    <property type="evidence" value="ECO:0007669"/>
    <property type="project" value="UniProtKB-KW"/>
</dbReference>
<dbReference type="GO" id="GO:0008360">
    <property type="term" value="P:regulation of cell shape"/>
    <property type="evidence" value="ECO:0007669"/>
    <property type="project" value="UniProtKB-KW"/>
</dbReference>
<dbReference type="GO" id="GO:0046677">
    <property type="term" value="P:response to antibiotic"/>
    <property type="evidence" value="ECO:0007669"/>
    <property type="project" value="UniProtKB-UniRule"/>
</dbReference>
<dbReference type="HAMAP" id="MF_01006">
    <property type="entry name" value="Undec_diphosphatase"/>
    <property type="match status" value="1"/>
</dbReference>
<dbReference type="InterPro" id="IPR003824">
    <property type="entry name" value="UppP"/>
</dbReference>
<dbReference type="NCBIfam" id="NF001393">
    <property type="entry name" value="PRK00281.2-4"/>
    <property type="match status" value="1"/>
</dbReference>
<dbReference type="PANTHER" id="PTHR30622">
    <property type="entry name" value="UNDECAPRENYL-DIPHOSPHATASE"/>
    <property type="match status" value="1"/>
</dbReference>
<dbReference type="PANTHER" id="PTHR30622:SF4">
    <property type="entry name" value="UNDECAPRENYL-DIPHOSPHATASE"/>
    <property type="match status" value="1"/>
</dbReference>
<dbReference type="Pfam" id="PF02673">
    <property type="entry name" value="BacA"/>
    <property type="match status" value="1"/>
</dbReference>